<accession>P49846</accession>
<accession>Q9V5R1</accession>
<gene>
    <name type="primary">Taf5</name>
    <name type="synonym">TAF80</name>
    <name type="ORF">CG7704</name>
</gene>
<evidence type="ECO:0000256" key="1">
    <source>
        <dbReference type="SAM" id="MobiDB-lite"/>
    </source>
</evidence>
<evidence type="ECO:0000269" key="2">
    <source>
    </source>
</evidence>
<evidence type="ECO:0000305" key="3"/>
<comment type="function">
    <text evidence="2">TFIID is a multimeric protein complex that plays a central role in mediating promoter responses to various activators and repressors. May play a role in helping to anchor Taf4 within the TFIID complex. May be involved in transducing signals from various transcriptional regulators to the RNA polymerase II transcription machinery.</text>
</comment>
<comment type="subunit">
    <text evidence="2">Belongs to the TFIID complex which is composed of TATA binding protein (Tbp) and a number of TBP-associated factors (Tafs). Interacts with Tbp and Taf4.</text>
</comment>
<comment type="interaction">
    <interactant intactId="EBI-15595394">
        <id>P49846</id>
    </interactant>
    <interactant intactId="EBI-131186">
        <id>Q9VWF2</id>
        <label>e(y)3</label>
    </interactant>
    <organismsDiffer>false</organismsDiffer>
    <experiments>5</experiments>
</comment>
<comment type="subcellular location">
    <subcellularLocation>
        <location>Nucleus</location>
    </subcellularLocation>
</comment>
<comment type="similarity">
    <text evidence="3">Belongs to the WD repeat TAF5 family.</text>
</comment>
<sequence>MSLEVSNINGGNGTQLSHDKRELLCLLKLIKKYQLKSTEELLCQEANVSSVELSEISESDVQQVLGAVLGAGDANRERKHVQSPAQGHKQSAVTEANAAEELAKFIDDDSFDAQHYEQAYKELRTFVEDSLDIYKHELSMVLYPILVQIYFKILASGLREKAKEFIEKYKCDLDGYYIEGLFNLLLLSKPEELLENDLVVAMEQDKFVIRMSRDSHSLFKRHIQDRRQEVVADIVSKYLHFDTYEGMARNKLQCVATAGSHLGEAKRQDNKMRVYYGLLKEVDFQTLTTPAPAPEEEDDDPDAPDRPKKKKPKKDPLLSKKSKSDPNAPSIDRIPLPELKDSDKLLKLKALREASKRLALSKDQLPSAVFYTVLNSHQGVTCAEISDDSTMLACGFGDSSVRIWSLTPAKLRTLKDADSLRELDKESADINVRMLDDRSGEVTRSLMGHTGPVYRCAFAPEMNLLLSCSEDSTIRLWSLLTWSCVVTYRGHVYPVWDVRFAPHGYYFVSCSYDKTARLWATDSNQALRVFVGHLSDVDCVQFHPNSNYVATGSSDRTVRLWDNMTGQSVRLMTGHKGSVSSLAFSACGRYLASGSVDHNIIIWDLSNGSLVTTLLRHTSTVTTITFSRDGTVLAAAGLDNNLTLWDFHKVTEDYISNHITVSHHQDENDEDVYLMRTFPSKNSPFVSLHFTRRNLLMCVGLFKS</sequence>
<feature type="chain" id="PRO_0000051256" description="Transcription initiation factor TFIID subunit 5">
    <location>
        <begin position="1"/>
        <end position="704"/>
    </location>
</feature>
<feature type="repeat" description="WD 1">
    <location>
        <begin position="376"/>
        <end position="405"/>
    </location>
</feature>
<feature type="repeat" description="WD 2">
    <location>
        <begin position="448"/>
        <end position="478"/>
    </location>
</feature>
<feature type="repeat" description="WD 3">
    <location>
        <begin position="490"/>
        <end position="520"/>
    </location>
</feature>
<feature type="repeat" description="WD 4">
    <location>
        <begin position="532"/>
        <end position="562"/>
    </location>
</feature>
<feature type="repeat" description="WD 5">
    <location>
        <begin position="574"/>
        <end position="604"/>
    </location>
</feature>
<feature type="repeat" description="WD 6">
    <location>
        <begin position="616"/>
        <end position="646"/>
    </location>
</feature>
<feature type="region of interest" description="Disordered" evidence="1">
    <location>
        <begin position="287"/>
        <end position="336"/>
    </location>
</feature>
<feature type="compositionally biased region" description="Basic and acidic residues" evidence="1">
    <location>
        <begin position="314"/>
        <end position="324"/>
    </location>
</feature>
<feature type="sequence conflict" description="In Ref. 2; AA sequence." evidence="3" ref="2">
    <original>KL</original>
    <variation>NV</variation>
    <location>
        <begin position="410"/>
        <end position="411"/>
    </location>
</feature>
<protein>
    <recommendedName>
        <fullName>Transcription initiation factor TFIID subunit 5</fullName>
    </recommendedName>
    <alternativeName>
        <fullName>TAFII-80</fullName>
    </alternativeName>
    <alternativeName>
        <fullName>Transcription initiation factor TFIID 85 kDa subunit</fullName>
        <shortName>p85</shortName>
    </alternativeName>
</protein>
<keyword id="KW-0903">Direct protein sequencing</keyword>
<keyword id="KW-0539">Nucleus</keyword>
<keyword id="KW-1185">Reference proteome</keyword>
<keyword id="KW-0677">Repeat</keyword>
<keyword id="KW-0804">Transcription</keyword>
<keyword id="KW-0805">Transcription regulation</keyword>
<keyword id="KW-0853">WD repeat</keyword>
<dbReference type="EMBL" id="U06460">
    <property type="protein sequence ID" value="AAC46481.1"/>
    <property type="molecule type" value="mRNA"/>
</dbReference>
<dbReference type="EMBL" id="AE013599">
    <property type="protein sequence ID" value="AAF58737.1"/>
    <property type="molecule type" value="Genomic_DNA"/>
</dbReference>
<dbReference type="EMBL" id="AY051960">
    <property type="protein sequence ID" value="AAK93384.1"/>
    <property type="molecule type" value="mRNA"/>
</dbReference>
<dbReference type="PIR" id="S33263">
    <property type="entry name" value="S33263"/>
</dbReference>
<dbReference type="RefSeq" id="NP_476957.1">
    <property type="nucleotide sequence ID" value="NM_057609.6"/>
</dbReference>
<dbReference type="SMR" id="P49846"/>
<dbReference type="BioGRID" id="71045">
    <property type="interactions" value="26"/>
</dbReference>
<dbReference type="DIP" id="DIP-48906N"/>
<dbReference type="FunCoup" id="P49846">
    <property type="interactions" value="1279"/>
</dbReference>
<dbReference type="IntAct" id="P49846">
    <property type="interactions" value="10"/>
</dbReference>
<dbReference type="STRING" id="7227.FBpp0087335"/>
<dbReference type="PaxDb" id="7227-FBpp0087335"/>
<dbReference type="DNASU" id="47900"/>
<dbReference type="EnsemblMetazoa" id="FBtr0088240">
    <property type="protein sequence ID" value="FBpp0087335"/>
    <property type="gene ID" value="FBgn0010356"/>
</dbReference>
<dbReference type="GeneID" id="47900"/>
<dbReference type="KEGG" id="dme:Dmel_CG7704"/>
<dbReference type="AGR" id="FB:FBgn0010356"/>
<dbReference type="CTD" id="6877"/>
<dbReference type="FlyBase" id="FBgn0010356">
    <property type="gene designation" value="Taf5"/>
</dbReference>
<dbReference type="VEuPathDB" id="VectorBase:FBgn0010356"/>
<dbReference type="eggNOG" id="KOG0263">
    <property type="taxonomic scope" value="Eukaryota"/>
</dbReference>
<dbReference type="GeneTree" id="ENSGT00940000153342"/>
<dbReference type="HOGENOM" id="CLU_005884_2_1_1"/>
<dbReference type="InParanoid" id="P49846"/>
<dbReference type="OMA" id="DAQHYEQ"/>
<dbReference type="OrthoDB" id="10266330at2759"/>
<dbReference type="PhylomeDB" id="P49846"/>
<dbReference type="Reactome" id="R-DME-674695">
    <property type="pathway name" value="RNA Polymerase II Pre-transcription Events"/>
</dbReference>
<dbReference type="Reactome" id="R-DME-6804756">
    <property type="pathway name" value="Regulation of TP53 Activity through Phosphorylation"/>
</dbReference>
<dbReference type="Reactome" id="R-DME-6807505">
    <property type="pathway name" value="RNA polymerase II transcribes snRNA genes"/>
</dbReference>
<dbReference type="Reactome" id="R-DME-73776">
    <property type="pathway name" value="RNA Polymerase II Promoter Escape"/>
</dbReference>
<dbReference type="Reactome" id="R-DME-73779">
    <property type="pathway name" value="RNA Polymerase II Transcription Pre-Initiation And Promoter Opening"/>
</dbReference>
<dbReference type="Reactome" id="R-DME-75953">
    <property type="pathway name" value="RNA Polymerase II Transcription Initiation"/>
</dbReference>
<dbReference type="Reactome" id="R-DME-76042">
    <property type="pathway name" value="RNA Polymerase II Transcription Initiation And Promoter Clearance"/>
</dbReference>
<dbReference type="Reactome" id="R-DME-9907900">
    <property type="pathway name" value="Proteasome assembly"/>
</dbReference>
<dbReference type="BioGRID-ORCS" id="47900">
    <property type="hits" value="0 hits in 1 CRISPR screen"/>
</dbReference>
<dbReference type="GenomeRNAi" id="47900"/>
<dbReference type="PRO" id="PR:P49846"/>
<dbReference type="Proteomes" id="UP000000803">
    <property type="component" value="Chromosome 2R"/>
</dbReference>
<dbReference type="Bgee" id="FBgn0010356">
    <property type="expression patterns" value="Expressed in muscle cell in haltere and 60 other cell types or tissues"/>
</dbReference>
<dbReference type="ExpressionAtlas" id="P49846">
    <property type="expression patterns" value="baseline and differential"/>
</dbReference>
<dbReference type="GO" id="GO:0005634">
    <property type="term" value="C:nucleus"/>
    <property type="evidence" value="ECO:0000314"/>
    <property type="project" value="FlyBase"/>
</dbReference>
<dbReference type="GO" id="GO:0005669">
    <property type="term" value="C:transcription factor TFIID complex"/>
    <property type="evidence" value="ECO:0000314"/>
    <property type="project" value="FlyBase"/>
</dbReference>
<dbReference type="GO" id="GO:0006367">
    <property type="term" value="P:transcription initiation at RNA polymerase II promoter"/>
    <property type="evidence" value="ECO:0000314"/>
    <property type="project" value="FlyBase"/>
</dbReference>
<dbReference type="CDD" id="cd08044">
    <property type="entry name" value="TAF5_NTD2"/>
    <property type="match status" value="1"/>
</dbReference>
<dbReference type="CDD" id="cd00200">
    <property type="entry name" value="WD40"/>
    <property type="match status" value="1"/>
</dbReference>
<dbReference type="FunFam" id="1.25.40.500:FF:000004">
    <property type="entry name" value="Transcription initiation factor TFIID subunit"/>
    <property type="match status" value="1"/>
</dbReference>
<dbReference type="FunFam" id="2.130.10.10:FF:000243">
    <property type="entry name" value="Transcription initiation factor TFIID subunit 5"/>
    <property type="match status" value="1"/>
</dbReference>
<dbReference type="Gene3D" id="1.25.40.500">
    <property type="entry name" value="TFIID subunit TAF5, NTD2 domain"/>
    <property type="match status" value="1"/>
</dbReference>
<dbReference type="Gene3D" id="2.130.10.10">
    <property type="entry name" value="YVTN repeat-like/Quinoprotein amine dehydrogenase"/>
    <property type="match status" value="2"/>
</dbReference>
<dbReference type="InterPro" id="IPR020472">
    <property type="entry name" value="G-protein_beta_WD-40_rep"/>
</dbReference>
<dbReference type="InterPro" id="IPR007582">
    <property type="entry name" value="TFIID_NTD2"/>
</dbReference>
<dbReference type="InterPro" id="IPR037264">
    <property type="entry name" value="TFIID_NTD2_sf"/>
</dbReference>
<dbReference type="InterPro" id="IPR015943">
    <property type="entry name" value="WD40/YVTN_repeat-like_dom_sf"/>
</dbReference>
<dbReference type="InterPro" id="IPR019775">
    <property type="entry name" value="WD40_repeat_CS"/>
</dbReference>
<dbReference type="InterPro" id="IPR036322">
    <property type="entry name" value="WD40_repeat_dom_sf"/>
</dbReference>
<dbReference type="InterPro" id="IPR001680">
    <property type="entry name" value="WD40_rpt"/>
</dbReference>
<dbReference type="PANTHER" id="PTHR19879:SF1">
    <property type="entry name" value="CANNONBALL-RELATED"/>
    <property type="match status" value="1"/>
</dbReference>
<dbReference type="PANTHER" id="PTHR19879">
    <property type="entry name" value="TRANSCRIPTION INITIATION FACTOR TFIID"/>
    <property type="match status" value="1"/>
</dbReference>
<dbReference type="Pfam" id="PF23869">
    <property type="entry name" value="Beta-prop_WDR75_1st"/>
    <property type="match status" value="1"/>
</dbReference>
<dbReference type="Pfam" id="PF04494">
    <property type="entry name" value="TFIID_NTD2"/>
    <property type="match status" value="1"/>
</dbReference>
<dbReference type="Pfam" id="PF00400">
    <property type="entry name" value="WD40"/>
    <property type="match status" value="3"/>
</dbReference>
<dbReference type="PRINTS" id="PR00320">
    <property type="entry name" value="GPROTEINBRPT"/>
</dbReference>
<dbReference type="SMART" id="SM00320">
    <property type="entry name" value="WD40"/>
    <property type="match status" value="6"/>
</dbReference>
<dbReference type="SUPFAM" id="SSF160897">
    <property type="entry name" value="Taf5 N-terminal domain-like"/>
    <property type="match status" value="1"/>
</dbReference>
<dbReference type="SUPFAM" id="SSF50978">
    <property type="entry name" value="WD40 repeat-like"/>
    <property type="match status" value="1"/>
</dbReference>
<dbReference type="PROSITE" id="PS00678">
    <property type="entry name" value="WD_REPEATS_1"/>
    <property type="match status" value="3"/>
</dbReference>
<dbReference type="PROSITE" id="PS50082">
    <property type="entry name" value="WD_REPEATS_2"/>
    <property type="match status" value="6"/>
</dbReference>
<dbReference type="PROSITE" id="PS50294">
    <property type="entry name" value="WD_REPEATS_REGION"/>
    <property type="match status" value="2"/>
</dbReference>
<proteinExistence type="evidence at protein level"/>
<organism>
    <name type="scientific">Drosophila melanogaster</name>
    <name type="common">Fruit fly</name>
    <dbReference type="NCBI Taxonomy" id="7227"/>
    <lineage>
        <taxon>Eukaryota</taxon>
        <taxon>Metazoa</taxon>
        <taxon>Ecdysozoa</taxon>
        <taxon>Arthropoda</taxon>
        <taxon>Hexapoda</taxon>
        <taxon>Insecta</taxon>
        <taxon>Pterygota</taxon>
        <taxon>Neoptera</taxon>
        <taxon>Endopterygota</taxon>
        <taxon>Diptera</taxon>
        <taxon>Brachycera</taxon>
        <taxon>Muscomorpha</taxon>
        <taxon>Ephydroidea</taxon>
        <taxon>Drosophilidae</taxon>
        <taxon>Drosophila</taxon>
        <taxon>Sophophora</taxon>
    </lineage>
</organism>
<reference key="1">
    <citation type="journal article" date="1993" name="Mol. Cell. Biol.">
        <title>Molecular cloning, expression, and characterization of the Drosophila 85-kilodalton TFIID subunit.</title>
        <authorList>
            <person name="Kokubo T."/>
            <person name="Gong D.-W."/>
            <person name="Yamashita S."/>
            <person name="Takada R."/>
            <person name="Roeder R.G."/>
            <person name="Horikoshi M."/>
            <person name="Nakatani Y."/>
        </authorList>
    </citation>
    <scope>NUCLEOTIDE SEQUENCE [MRNA]</scope>
    <scope>PROTEIN SEQUENCE OF 105-120; 272-280 AND 365-374</scope>
    <scope>FUNCTION</scope>
    <scope>INTERACTION WITH TBP AND TAF4</scope>
    <source>
        <tissue>Embryo</tissue>
    </source>
</reference>
<reference key="2">
    <citation type="journal article" date="1993" name="Nature">
        <title>The dTAFII80 subunit of Drosophila TFIID contains beta-transducin repeats.</title>
        <authorList>
            <person name="Dynlacht B.D."/>
            <person name="Weinzierl R.O.J."/>
            <person name="Admon A."/>
            <person name="Tjian R."/>
        </authorList>
    </citation>
    <scope>NUCLEOTIDE SEQUENCE</scope>
    <scope>PARTIAL PROTEIN SEQUENCE</scope>
    <source>
        <tissue>Embryo</tissue>
    </source>
</reference>
<reference key="3">
    <citation type="journal article" date="2000" name="Science">
        <title>The genome sequence of Drosophila melanogaster.</title>
        <authorList>
            <person name="Adams M.D."/>
            <person name="Celniker S.E."/>
            <person name="Holt R.A."/>
            <person name="Evans C.A."/>
            <person name="Gocayne J.D."/>
            <person name="Amanatides P.G."/>
            <person name="Scherer S.E."/>
            <person name="Li P.W."/>
            <person name="Hoskins R.A."/>
            <person name="Galle R.F."/>
            <person name="George R.A."/>
            <person name="Lewis S.E."/>
            <person name="Richards S."/>
            <person name="Ashburner M."/>
            <person name="Henderson S.N."/>
            <person name="Sutton G.G."/>
            <person name="Wortman J.R."/>
            <person name="Yandell M.D."/>
            <person name="Zhang Q."/>
            <person name="Chen L.X."/>
            <person name="Brandon R.C."/>
            <person name="Rogers Y.-H.C."/>
            <person name="Blazej R.G."/>
            <person name="Champe M."/>
            <person name="Pfeiffer B.D."/>
            <person name="Wan K.H."/>
            <person name="Doyle C."/>
            <person name="Baxter E.G."/>
            <person name="Helt G."/>
            <person name="Nelson C.R."/>
            <person name="Miklos G.L.G."/>
            <person name="Abril J.F."/>
            <person name="Agbayani A."/>
            <person name="An H.-J."/>
            <person name="Andrews-Pfannkoch C."/>
            <person name="Baldwin D."/>
            <person name="Ballew R.M."/>
            <person name="Basu A."/>
            <person name="Baxendale J."/>
            <person name="Bayraktaroglu L."/>
            <person name="Beasley E.M."/>
            <person name="Beeson K.Y."/>
            <person name="Benos P.V."/>
            <person name="Berman B.P."/>
            <person name="Bhandari D."/>
            <person name="Bolshakov S."/>
            <person name="Borkova D."/>
            <person name="Botchan M.R."/>
            <person name="Bouck J."/>
            <person name="Brokstein P."/>
            <person name="Brottier P."/>
            <person name="Burtis K.C."/>
            <person name="Busam D.A."/>
            <person name="Butler H."/>
            <person name="Cadieu E."/>
            <person name="Center A."/>
            <person name="Chandra I."/>
            <person name="Cherry J.M."/>
            <person name="Cawley S."/>
            <person name="Dahlke C."/>
            <person name="Davenport L.B."/>
            <person name="Davies P."/>
            <person name="de Pablos B."/>
            <person name="Delcher A."/>
            <person name="Deng Z."/>
            <person name="Mays A.D."/>
            <person name="Dew I."/>
            <person name="Dietz S.M."/>
            <person name="Dodson K."/>
            <person name="Doup L.E."/>
            <person name="Downes M."/>
            <person name="Dugan-Rocha S."/>
            <person name="Dunkov B.C."/>
            <person name="Dunn P."/>
            <person name="Durbin K.J."/>
            <person name="Evangelista C.C."/>
            <person name="Ferraz C."/>
            <person name="Ferriera S."/>
            <person name="Fleischmann W."/>
            <person name="Fosler C."/>
            <person name="Gabrielian A.E."/>
            <person name="Garg N.S."/>
            <person name="Gelbart W.M."/>
            <person name="Glasser K."/>
            <person name="Glodek A."/>
            <person name="Gong F."/>
            <person name="Gorrell J.H."/>
            <person name="Gu Z."/>
            <person name="Guan P."/>
            <person name="Harris M."/>
            <person name="Harris N.L."/>
            <person name="Harvey D.A."/>
            <person name="Heiman T.J."/>
            <person name="Hernandez J.R."/>
            <person name="Houck J."/>
            <person name="Hostin D."/>
            <person name="Houston K.A."/>
            <person name="Howland T.J."/>
            <person name="Wei M.-H."/>
            <person name="Ibegwam C."/>
            <person name="Jalali M."/>
            <person name="Kalush F."/>
            <person name="Karpen G.H."/>
            <person name="Ke Z."/>
            <person name="Kennison J.A."/>
            <person name="Ketchum K.A."/>
            <person name="Kimmel B.E."/>
            <person name="Kodira C.D."/>
            <person name="Kraft C.L."/>
            <person name="Kravitz S."/>
            <person name="Kulp D."/>
            <person name="Lai Z."/>
            <person name="Lasko P."/>
            <person name="Lei Y."/>
            <person name="Levitsky A.A."/>
            <person name="Li J.H."/>
            <person name="Li Z."/>
            <person name="Liang Y."/>
            <person name="Lin X."/>
            <person name="Liu X."/>
            <person name="Mattei B."/>
            <person name="McIntosh T.C."/>
            <person name="McLeod M.P."/>
            <person name="McPherson D."/>
            <person name="Merkulov G."/>
            <person name="Milshina N.V."/>
            <person name="Mobarry C."/>
            <person name="Morris J."/>
            <person name="Moshrefi A."/>
            <person name="Mount S.M."/>
            <person name="Moy M."/>
            <person name="Murphy B."/>
            <person name="Murphy L."/>
            <person name="Muzny D.M."/>
            <person name="Nelson D.L."/>
            <person name="Nelson D.R."/>
            <person name="Nelson K.A."/>
            <person name="Nixon K."/>
            <person name="Nusskern D.R."/>
            <person name="Pacleb J.M."/>
            <person name="Palazzolo M."/>
            <person name="Pittman G.S."/>
            <person name="Pan S."/>
            <person name="Pollard J."/>
            <person name="Puri V."/>
            <person name="Reese M.G."/>
            <person name="Reinert K."/>
            <person name="Remington K."/>
            <person name="Saunders R.D.C."/>
            <person name="Scheeler F."/>
            <person name="Shen H."/>
            <person name="Shue B.C."/>
            <person name="Siden-Kiamos I."/>
            <person name="Simpson M."/>
            <person name="Skupski M.P."/>
            <person name="Smith T.J."/>
            <person name="Spier E."/>
            <person name="Spradling A.C."/>
            <person name="Stapleton M."/>
            <person name="Strong R."/>
            <person name="Sun E."/>
            <person name="Svirskas R."/>
            <person name="Tector C."/>
            <person name="Turner R."/>
            <person name="Venter E."/>
            <person name="Wang A.H."/>
            <person name="Wang X."/>
            <person name="Wang Z.-Y."/>
            <person name="Wassarman D.A."/>
            <person name="Weinstock G.M."/>
            <person name="Weissenbach J."/>
            <person name="Williams S.M."/>
            <person name="Woodage T."/>
            <person name="Worley K.C."/>
            <person name="Wu D."/>
            <person name="Yang S."/>
            <person name="Yao Q.A."/>
            <person name="Ye J."/>
            <person name="Yeh R.-F."/>
            <person name="Zaveri J.S."/>
            <person name="Zhan M."/>
            <person name="Zhang G."/>
            <person name="Zhao Q."/>
            <person name="Zheng L."/>
            <person name="Zheng X.H."/>
            <person name="Zhong F.N."/>
            <person name="Zhong W."/>
            <person name="Zhou X."/>
            <person name="Zhu S.C."/>
            <person name="Zhu X."/>
            <person name="Smith H.O."/>
            <person name="Gibbs R.A."/>
            <person name="Myers E.W."/>
            <person name="Rubin G.M."/>
            <person name="Venter J.C."/>
        </authorList>
    </citation>
    <scope>NUCLEOTIDE SEQUENCE [LARGE SCALE GENOMIC DNA]</scope>
    <source>
        <strain>Berkeley</strain>
    </source>
</reference>
<reference key="4">
    <citation type="journal article" date="2002" name="Genome Biol.">
        <title>Annotation of the Drosophila melanogaster euchromatic genome: a systematic review.</title>
        <authorList>
            <person name="Misra S."/>
            <person name="Crosby M.A."/>
            <person name="Mungall C.J."/>
            <person name="Matthews B.B."/>
            <person name="Campbell K.S."/>
            <person name="Hradecky P."/>
            <person name="Huang Y."/>
            <person name="Kaminker J.S."/>
            <person name="Millburn G.H."/>
            <person name="Prochnik S.E."/>
            <person name="Smith C.D."/>
            <person name="Tupy J.L."/>
            <person name="Whitfield E.J."/>
            <person name="Bayraktaroglu L."/>
            <person name="Berman B.P."/>
            <person name="Bettencourt B.R."/>
            <person name="Celniker S.E."/>
            <person name="de Grey A.D.N.J."/>
            <person name="Drysdale R.A."/>
            <person name="Harris N.L."/>
            <person name="Richter J."/>
            <person name="Russo S."/>
            <person name="Schroeder A.J."/>
            <person name="Shu S.Q."/>
            <person name="Stapleton M."/>
            <person name="Yamada C."/>
            <person name="Ashburner M."/>
            <person name="Gelbart W.M."/>
            <person name="Rubin G.M."/>
            <person name="Lewis S.E."/>
        </authorList>
    </citation>
    <scope>GENOME REANNOTATION</scope>
    <source>
        <strain>Berkeley</strain>
    </source>
</reference>
<reference key="5">
    <citation type="journal article" date="2002" name="Genome Biol.">
        <title>A Drosophila full-length cDNA resource.</title>
        <authorList>
            <person name="Stapleton M."/>
            <person name="Carlson J.W."/>
            <person name="Brokstein P."/>
            <person name="Yu C."/>
            <person name="Champe M."/>
            <person name="George R.A."/>
            <person name="Guarin H."/>
            <person name="Kronmiller B."/>
            <person name="Pacleb J.M."/>
            <person name="Park S."/>
            <person name="Wan K.H."/>
            <person name="Rubin G.M."/>
            <person name="Celniker S.E."/>
        </authorList>
    </citation>
    <scope>NUCLEOTIDE SEQUENCE [LARGE SCALE MRNA]</scope>
    <source>
        <strain>Berkeley</strain>
        <tissue>Embryo</tissue>
    </source>
</reference>
<name>TAF5_DROME</name>